<feature type="chain" id="PRO_1000045220" description="5-oxoprolinase subunit A">
    <location>
        <begin position="1"/>
        <end position="254"/>
    </location>
</feature>
<keyword id="KW-0067">ATP-binding</keyword>
<keyword id="KW-0378">Hydrolase</keyword>
<keyword id="KW-0547">Nucleotide-binding</keyword>
<organism>
    <name type="scientific">Rhodopseudomonas palustris (strain BisB5)</name>
    <dbReference type="NCBI Taxonomy" id="316057"/>
    <lineage>
        <taxon>Bacteria</taxon>
        <taxon>Pseudomonadati</taxon>
        <taxon>Pseudomonadota</taxon>
        <taxon>Alphaproteobacteria</taxon>
        <taxon>Hyphomicrobiales</taxon>
        <taxon>Nitrobacteraceae</taxon>
        <taxon>Rhodopseudomonas</taxon>
    </lineage>
</organism>
<accession>Q136X6</accession>
<proteinExistence type="inferred from homology"/>
<evidence type="ECO:0000255" key="1">
    <source>
        <dbReference type="HAMAP-Rule" id="MF_00691"/>
    </source>
</evidence>
<dbReference type="EC" id="3.5.2.9" evidence="1"/>
<dbReference type="EMBL" id="CP000283">
    <property type="protein sequence ID" value="ABE39863.1"/>
    <property type="molecule type" value="Genomic_DNA"/>
</dbReference>
<dbReference type="SMR" id="Q136X6"/>
<dbReference type="STRING" id="316057.RPD_2634"/>
<dbReference type="KEGG" id="rpd:RPD_2634"/>
<dbReference type="eggNOG" id="COG1540">
    <property type="taxonomic scope" value="Bacteria"/>
</dbReference>
<dbReference type="HOGENOM" id="CLU_069535_0_0_5"/>
<dbReference type="BioCyc" id="RPAL316057:RPD_RS13250-MONOMER"/>
<dbReference type="Proteomes" id="UP000001818">
    <property type="component" value="Chromosome"/>
</dbReference>
<dbReference type="GO" id="GO:0017168">
    <property type="term" value="F:5-oxoprolinase (ATP-hydrolyzing) activity"/>
    <property type="evidence" value="ECO:0007669"/>
    <property type="project" value="UniProtKB-UniRule"/>
</dbReference>
<dbReference type="GO" id="GO:0005524">
    <property type="term" value="F:ATP binding"/>
    <property type="evidence" value="ECO:0007669"/>
    <property type="project" value="UniProtKB-UniRule"/>
</dbReference>
<dbReference type="GO" id="GO:0005975">
    <property type="term" value="P:carbohydrate metabolic process"/>
    <property type="evidence" value="ECO:0007669"/>
    <property type="project" value="InterPro"/>
</dbReference>
<dbReference type="CDD" id="cd10787">
    <property type="entry name" value="LamB_YcsF_like"/>
    <property type="match status" value="1"/>
</dbReference>
<dbReference type="Gene3D" id="3.20.20.370">
    <property type="entry name" value="Glycoside hydrolase/deacetylase"/>
    <property type="match status" value="1"/>
</dbReference>
<dbReference type="HAMAP" id="MF_00691">
    <property type="entry name" value="PxpA"/>
    <property type="match status" value="1"/>
</dbReference>
<dbReference type="InterPro" id="IPR011330">
    <property type="entry name" value="Glyco_hydro/deAcase_b/a-brl"/>
</dbReference>
<dbReference type="InterPro" id="IPR005501">
    <property type="entry name" value="LamB/YcsF/PxpA-like"/>
</dbReference>
<dbReference type="NCBIfam" id="NF003814">
    <property type="entry name" value="PRK05406.1-3"/>
    <property type="match status" value="1"/>
</dbReference>
<dbReference type="NCBIfam" id="NF003816">
    <property type="entry name" value="PRK05406.1-5"/>
    <property type="match status" value="1"/>
</dbReference>
<dbReference type="PANTHER" id="PTHR30292:SF0">
    <property type="entry name" value="5-OXOPROLINASE SUBUNIT A"/>
    <property type="match status" value="1"/>
</dbReference>
<dbReference type="PANTHER" id="PTHR30292">
    <property type="entry name" value="UNCHARACTERIZED PROTEIN YBGL-RELATED"/>
    <property type="match status" value="1"/>
</dbReference>
<dbReference type="Pfam" id="PF03746">
    <property type="entry name" value="LamB_YcsF"/>
    <property type="match status" value="1"/>
</dbReference>
<dbReference type="SUPFAM" id="SSF88713">
    <property type="entry name" value="Glycoside hydrolase/deacetylase"/>
    <property type="match status" value="1"/>
</dbReference>
<gene>
    <name evidence="1" type="primary">pxpA</name>
    <name type="ordered locus">RPD_2634</name>
</gene>
<sequence>MKIDLNCDLGEGYGAWQMGDDAAMMSIATSVNIACGFHAGDPDIMHKTVTMAKAHGVSIGAHPGFRDLHGFGRRPVPGITAAEIENLVAYQIGALQAVAALAGHKVTHVKAHGALSNVACEDDMTARAVAAAIKAVDPKLIFVVLANSKLVDAGEAAGLAMAHEVFADRTYEDDGNLVSRRKPGAVLHDAREIAQRVVRMVQDGAVVSVTGKIIKMRIDTVCIHGDTPGAVDIARGVRLALEERGATVVPFARR</sequence>
<reference key="1">
    <citation type="submission" date="2006-03" db="EMBL/GenBank/DDBJ databases">
        <title>Complete sequence of Rhodopseudomonas palustris BisB5.</title>
        <authorList>
            <consortium name="US DOE Joint Genome Institute"/>
            <person name="Copeland A."/>
            <person name="Lucas S."/>
            <person name="Lapidus A."/>
            <person name="Barry K."/>
            <person name="Detter J.C."/>
            <person name="Glavina del Rio T."/>
            <person name="Hammon N."/>
            <person name="Israni S."/>
            <person name="Dalin E."/>
            <person name="Tice H."/>
            <person name="Pitluck S."/>
            <person name="Chain P."/>
            <person name="Malfatti S."/>
            <person name="Shin M."/>
            <person name="Vergez L."/>
            <person name="Schmutz J."/>
            <person name="Larimer F."/>
            <person name="Land M."/>
            <person name="Hauser L."/>
            <person name="Pelletier D.A."/>
            <person name="Kyrpides N."/>
            <person name="Lykidis A."/>
            <person name="Oda Y."/>
            <person name="Harwood C.S."/>
            <person name="Richardson P."/>
        </authorList>
    </citation>
    <scope>NUCLEOTIDE SEQUENCE [LARGE SCALE GENOMIC DNA]</scope>
    <source>
        <strain>BisB5</strain>
    </source>
</reference>
<comment type="function">
    <text evidence="1">Catalyzes the cleavage of 5-oxoproline to form L-glutamate coupled to the hydrolysis of ATP to ADP and inorganic phosphate.</text>
</comment>
<comment type="catalytic activity">
    <reaction evidence="1">
        <text>5-oxo-L-proline + ATP + 2 H2O = L-glutamate + ADP + phosphate + H(+)</text>
        <dbReference type="Rhea" id="RHEA:10348"/>
        <dbReference type="ChEBI" id="CHEBI:15377"/>
        <dbReference type="ChEBI" id="CHEBI:15378"/>
        <dbReference type="ChEBI" id="CHEBI:29985"/>
        <dbReference type="ChEBI" id="CHEBI:30616"/>
        <dbReference type="ChEBI" id="CHEBI:43474"/>
        <dbReference type="ChEBI" id="CHEBI:58402"/>
        <dbReference type="ChEBI" id="CHEBI:456216"/>
        <dbReference type="EC" id="3.5.2.9"/>
    </reaction>
</comment>
<comment type="subunit">
    <text evidence="1">Forms a complex composed of PxpA, PxpB and PxpC.</text>
</comment>
<comment type="similarity">
    <text evidence="1">Belongs to the LamB/PxpA family.</text>
</comment>
<name>PXPA_RHOPS</name>
<protein>
    <recommendedName>
        <fullName evidence="1">5-oxoprolinase subunit A</fullName>
        <shortName evidence="1">5-OPase subunit A</shortName>
        <ecNumber evidence="1">3.5.2.9</ecNumber>
    </recommendedName>
    <alternativeName>
        <fullName evidence="1">5-oxoprolinase (ATP-hydrolyzing) subunit A</fullName>
    </alternativeName>
</protein>